<protein>
    <recommendedName>
        <fullName evidence="1">Preprotein translocase subunit SecG</fullName>
    </recommendedName>
    <alternativeName>
        <fullName evidence="1">Protein transport protein Sec61 subunit beta homolog</fullName>
    </alternativeName>
</protein>
<name>SECG_METTP</name>
<dbReference type="EMBL" id="CP000477">
    <property type="protein sequence ID" value="ABK15409.1"/>
    <property type="molecule type" value="Genomic_DNA"/>
</dbReference>
<dbReference type="RefSeq" id="WP_011696787.1">
    <property type="nucleotide sequence ID" value="NC_008553.1"/>
</dbReference>
<dbReference type="STRING" id="349307.Mthe_1642"/>
<dbReference type="GeneID" id="4462514"/>
<dbReference type="KEGG" id="mtp:Mthe_1642"/>
<dbReference type="HOGENOM" id="CLU_208205_1_0_2"/>
<dbReference type="OrthoDB" id="43651at2157"/>
<dbReference type="Proteomes" id="UP000000674">
    <property type="component" value="Chromosome"/>
</dbReference>
<dbReference type="GO" id="GO:0005886">
    <property type="term" value="C:plasma membrane"/>
    <property type="evidence" value="ECO:0007669"/>
    <property type="project" value="UniProtKB-SubCell"/>
</dbReference>
<dbReference type="GO" id="GO:0015031">
    <property type="term" value="P:protein transport"/>
    <property type="evidence" value="ECO:0007669"/>
    <property type="project" value="UniProtKB-UniRule"/>
</dbReference>
<dbReference type="HAMAP" id="MF_00751">
    <property type="entry name" value="SecG"/>
    <property type="match status" value="1"/>
</dbReference>
<dbReference type="InterPro" id="IPR023531">
    <property type="entry name" value="Preprot_translocase_SecG"/>
</dbReference>
<dbReference type="InterPro" id="IPR016482">
    <property type="entry name" value="SecG/Sec61-beta/Sbh"/>
</dbReference>
<dbReference type="NCBIfam" id="NF002318">
    <property type="entry name" value="PRK01253.1"/>
    <property type="match status" value="1"/>
</dbReference>
<dbReference type="Pfam" id="PF03911">
    <property type="entry name" value="Sec61_beta"/>
    <property type="match status" value="1"/>
</dbReference>
<gene>
    <name evidence="1" type="primary">secG</name>
    <name type="ordered locus">Mthe_1642</name>
</gene>
<comment type="function">
    <text evidence="1">Involved in protein export. The function of the beta subunit is unknown, but it may be involved in stabilization of the trimeric complex.</text>
</comment>
<comment type="subunit">
    <text evidence="1">Component of the protein translocase complex. Heterotrimer consisting of alpha (SecY), beta (SecG) and gamma (SecE) subunits. Can form oligomers of the heterotrimer.</text>
</comment>
<comment type="subcellular location">
    <subcellularLocation>
        <location evidence="1">Cell membrane</location>
        <topology evidence="1">Single-pass membrane protein</topology>
    </subcellularLocation>
</comment>
<comment type="similarity">
    <text evidence="1">Belongs to the SEC61-beta family.</text>
</comment>
<evidence type="ECO:0000255" key="1">
    <source>
        <dbReference type="HAMAP-Rule" id="MF_00751"/>
    </source>
</evidence>
<proteinExistence type="inferred from homology"/>
<feature type="chain" id="PRO_1000046579" description="Preprotein translocase subunit SecG">
    <location>
        <begin position="1"/>
        <end position="57"/>
    </location>
</feature>
<feature type="topological domain" description="Cytoplasmic" evidence="1">
    <location>
        <begin position="1"/>
        <end position="31"/>
    </location>
</feature>
<feature type="transmembrane region" description="Helical" evidence="1">
    <location>
        <begin position="32"/>
        <end position="53"/>
    </location>
</feature>
<feature type="topological domain" description="Extracellular" evidence="1">
    <location>
        <begin position="54"/>
        <end position="57"/>
    </location>
</feature>
<keyword id="KW-1003">Cell membrane</keyword>
<keyword id="KW-0472">Membrane</keyword>
<keyword id="KW-0653">Protein transport</keyword>
<keyword id="KW-1185">Reference proteome</keyword>
<keyword id="KW-0811">Translocation</keyword>
<keyword id="KW-0812">Transmembrane</keyword>
<keyword id="KW-1133">Transmembrane helix</keyword>
<keyword id="KW-0813">Transport</keyword>
<organism>
    <name type="scientific">Methanothrix thermoacetophila (strain DSM 6194 / JCM 14653 / NBRC 101360 / PT)</name>
    <name type="common">Methanosaeta thermophila</name>
    <dbReference type="NCBI Taxonomy" id="349307"/>
    <lineage>
        <taxon>Archaea</taxon>
        <taxon>Methanobacteriati</taxon>
        <taxon>Methanobacteriota</taxon>
        <taxon>Stenosarchaea group</taxon>
        <taxon>Methanomicrobia</taxon>
        <taxon>Methanotrichales</taxon>
        <taxon>Methanotrichaceae</taxon>
        <taxon>Methanothrix</taxon>
    </lineage>
</organism>
<reference key="1">
    <citation type="submission" date="2006-10" db="EMBL/GenBank/DDBJ databases">
        <title>Complete sequence of Methanosaeta thermophila PT.</title>
        <authorList>
            <consortium name="US DOE Joint Genome Institute"/>
            <person name="Copeland A."/>
            <person name="Lucas S."/>
            <person name="Lapidus A."/>
            <person name="Barry K."/>
            <person name="Detter J.C."/>
            <person name="Glavina del Rio T."/>
            <person name="Hammon N."/>
            <person name="Israni S."/>
            <person name="Pitluck S."/>
            <person name="Chain P."/>
            <person name="Malfatti S."/>
            <person name="Shin M."/>
            <person name="Vergez L."/>
            <person name="Schmutz J."/>
            <person name="Larimer F."/>
            <person name="Land M."/>
            <person name="Hauser L."/>
            <person name="Kyrpides N."/>
            <person name="Kim E."/>
            <person name="Smith K.S."/>
            <person name="Ingram-Smith C."/>
            <person name="Richardson P."/>
        </authorList>
    </citation>
    <scope>NUCLEOTIDE SEQUENCE [LARGE SCALE GENOMIC DNA]</scope>
    <source>
        <strain>DSM 6194 / JCM 14653 / NBRC 101360 / PT</strain>
    </source>
</reference>
<accession>A0B9N5</accession>
<sequence length="57" mass="6002">MAKKKGEGPGLMSSAGLMRYFESEETSIKLDPKMVIGAGIASGVAIMALNITFGLWP</sequence>